<geneLocation type="mitochondrion"/>
<evidence type="ECO:0000250" key="1">
    <source>
        <dbReference type="UniProtKB" id="P00403"/>
    </source>
</evidence>
<evidence type="ECO:0000250" key="2">
    <source>
        <dbReference type="UniProtKB" id="P00410"/>
    </source>
</evidence>
<evidence type="ECO:0000250" key="3">
    <source>
        <dbReference type="UniProtKB" id="P68530"/>
    </source>
</evidence>
<evidence type="ECO:0000305" key="4"/>
<name>COX2_SALSA</name>
<organism>
    <name type="scientific">Salmo salar</name>
    <name type="common">Atlantic salmon</name>
    <dbReference type="NCBI Taxonomy" id="8030"/>
    <lineage>
        <taxon>Eukaryota</taxon>
        <taxon>Metazoa</taxon>
        <taxon>Chordata</taxon>
        <taxon>Craniata</taxon>
        <taxon>Vertebrata</taxon>
        <taxon>Euteleostomi</taxon>
        <taxon>Actinopterygii</taxon>
        <taxon>Neopterygii</taxon>
        <taxon>Teleostei</taxon>
        <taxon>Protacanthopterygii</taxon>
        <taxon>Salmoniformes</taxon>
        <taxon>Salmonidae</taxon>
        <taxon>Salmoninae</taxon>
        <taxon>Salmo</taxon>
    </lineage>
</organism>
<accession>Q37677</accession>
<accession>Q9MPG8</accession>
<comment type="function">
    <text evidence="2">Component of the cytochrome c oxidase, the last enzyme in the mitochondrial electron transport chain which drives oxidative phosphorylation. The respiratory chain contains 3 multisubunit complexes succinate dehydrogenase (complex II, CII), ubiquinol-cytochrome c oxidoreductase (cytochrome b-c1 complex, complex III, CIII) and cytochrome c oxidase (complex IV, CIV), that cooperate to transfer electrons derived from NADH and succinate to molecular oxygen, creating an electrochemical gradient over the inner membrane that drives transmembrane transport and the ATP synthase. Cytochrome c oxidase is the component of the respiratory chain that catalyzes the reduction of oxygen to water. Electrons originating from reduced cytochrome c in the intermembrane space (IMS) are transferred via the dinuclear copper A center (CU(A)) of subunit 2 and heme A of subunit 1 to the active site in subunit 1, a binuclear center (BNC) formed by heme A3 and copper B (CU(B)). The BNC reduces molecular oxygen to 2 water molecules using 4 electrons from cytochrome c in the IMS and 4 protons from the mitochondrial matrix.</text>
</comment>
<comment type="catalytic activity">
    <reaction evidence="2">
        <text>4 Fe(II)-[cytochrome c] + O2 + 8 H(+)(in) = 4 Fe(III)-[cytochrome c] + 2 H2O + 4 H(+)(out)</text>
        <dbReference type="Rhea" id="RHEA:11436"/>
        <dbReference type="Rhea" id="RHEA-COMP:10350"/>
        <dbReference type="Rhea" id="RHEA-COMP:14399"/>
        <dbReference type="ChEBI" id="CHEBI:15377"/>
        <dbReference type="ChEBI" id="CHEBI:15378"/>
        <dbReference type="ChEBI" id="CHEBI:15379"/>
        <dbReference type="ChEBI" id="CHEBI:29033"/>
        <dbReference type="ChEBI" id="CHEBI:29034"/>
        <dbReference type="EC" id="7.1.1.9"/>
    </reaction>
    <physiologicalReaction direction="left-to-right" evidence="2">
        <dbReference type="Rhea" id="RHEA:11437"/>
    </physiologicalReaction>
</comment>
<comment type="cofactor">
    <cofactor evidence="3">
        <name>Cu cation</name>
        <dbReference type="ChEBI" id="CHEBI:23378"/>
    </cofactor>
    <text evidence="3">Binds a dinuclear copper A center per subunit.</text>
</comment>
<comment type="subunit">
    <text evidence="1 3">Component of the cytochrome c oxidase (complex IV, CIV), a multisubunit enzyme composed of 14 subunits. The complex is composed of a catalytic core of 3 subunits MT-CO1, MT-CO2 and MT-CO3, encoded in the mitochondrial DNA, and 11 supernumerary subunits COX4I, COX5A, COX5B, COX6A, COX6B, COX6C, COX7A, COX7B, COX7C, COX8 and NDUFA4, which are encoded in the nuclear genome. The complex exists as a monomer or a dimer and forms supercomplexes (SCs) in the inner mitochondrial membrane with NADH-ubiquinone oxidoreductase (complex I, CI) and ubiquinol-cytochrome c oxidoreductase (cytochrome b-c1 complex, complex III, CIII), resulting in different assemblies (supercomplex SCI(1)III(2)IV(1) and megacomplex MCI(2)III(2)IV(2)) (By similarity). Found in a complex with TMEM177, COA6, COX18, COX20, SCO1 and SCO2. Interacts with TMEM177 in a COX20-dependent manner. Interacts with COX20. Interacts with COX16 (By similarity).</text>
</comment>
<comment type="subcellular location">
    <subcellularLocation>
        <location evidence="3">Mitochondrion inner membrane</location>
        <topology evidence="3">Multi-pass membrane protein</topology>
    </subcellularLocation>
</comment>
<comment type="similarity">
    <text evidence="4">Belongs to the cytochrome c oxidase subunit 2 family.</text>
</comment>
<gene>
    <name type="primary">mt-co2</name>
    <name type="synonym">coii</name>
    <name type="synonym">coxii</name>
    <name type="synonym">mtco2</name>
</gene>
<feature type="chain" id="PRO_0000183683" description="Cytochrome c oxidase subunit 2">
    <location>
        <begin position="1"/>
        <end position="230"/>
    </location>
</feature>
<feature type="topological domain" description="Mitochondrial intermembrane" evidence="3">
    <location>
        <begin position="1"/>
        <end position="14"/>
    </location>
</feature>
<feature type="transmembrane region" description="Helical; Name=I" evidence="3">
    <location>
        <begin position="15"/>
        <end position="45"/>
    </location>
</feature>
<feature type="topological domain" description="Mitochondrial matrix" evidence="3">
    <location>
        <begin position="46"/>
        <end position="59"/>
    </location>
</feature>
<feature type="transmembrane region" description="Helical; Name=II" evidence="3">
    <location>
        <begin position="60"/>
        <end position="87"/>
    </location>
</feature>
<feature type="topological domain" description="Mitochondrial intermembrane" evidence="3">
    <location>
        <begin position="88"/>
        <end position="230"/>
    </location>
</feature>
<feature type="binding site" evidence="3">
    <location>
        <position position="161"/>
    </location>
    <ligand>
        <name>Cu cation</name>
        <dbReference type="ChEBI" id="CHEBI:23378"/>
        <label>A1</label>
    </ligand>
</feature>
<feature type="binding site" evidence="3">
    <location>
        <position position="196"/>
    </location>
    <ligand>
        <name>Cu cation</name>
        <dbReference type="ChEBI" id="CHEBI:23378"/>
        <label>A1</label>
    </ligand>
</feature>
<feature type="binding site" evidence="3">
    <location>
        <position position="196"/>
    </location>
    <ligand>
        <name>Cu cation</name>
        <dbReference type="ChEBI" id="CHEBI:23378"/>
        <label>A2</label>
    </ligand>
</feature>
<feature type="binding site" evidence="3">
    <location>
        <position position="198"/>
    </location>
    <ligand>
        <name>Cu cation</name>
        <dbReference type="ChEBI" id="CHEBI:23378"/>
        <label>A2</label>
    </ligand>
</feature>
<feature type="binding site" evidence="3">
    <location>
        <position position="198"/>
    </location>
    <ligand>
        <name>Mg(2+)</name>
        <dbReference type="ChEBI" id="CHEBI:18420"/>
        <note>ligand shared with MT-CO1</note>
    </ligand>
</feature>
<feature type="binding site" evidence="3">
    <location>
        <position position="200"/>
    </location>
    <ligand>
        <name>Cu cation</name>
        <dbReference type="ChEBI" id="CHEBI:23378"/>
        <label>A1</label>
    </ligand>
</feature>
<feature type="binding site" evidence="3">
    <location>
        <position position="200"/>
    </location>
    <ligand>
        <name>Cu cation</name>
        <dbReference type="ChEBI" id="CHEBI:23378"/>
        <label>A2</label>
    </ligand>
</feature>
<feature type="binding site" evidence="3">
    <location>
        <position position="204"/>
    </location>
    <ligand>
        <name>Cu cation</name>
        <dbReference type="ChEBI" id="CHEBI:23378"/>
        <label>A2</label>
    </ligand>
</feature>
<feature type="binding site" evidence="3">
    <location>
        <position position="207"/>
    </location>
    <ligand>
        <name>Cu cation</name>
        <dbReference type="ChEBI" id="CHEBI:23378"/>
        <label>A1</label>
    </ligand>
</feature>
<feature type="sequence conflict" description="In Ref. 1; AAD04736." evidence="4" ref="1">
    <original>S</original>
    <variation>V</variation>
    <location>
        <position position="175"/>
    </location>
</feature>
<feature type="sequence conflict" description="In Ref. 3; AAB08524." evidence="4" ref="3">
    <original>I</original>
    <variation>V</variation>
    <location>
        <position position="209"/>
    </location>
</feature>
<feature type="sequence conflict" description="In Ref. 3; AAB08524." evidence="4" ref="3">
    <original>LEDA</original>
    <variation>TW</variation>
    <location>
        <begin position="227"/>
        <end position="230"/>
    </location>
</feature>
<protein>
    <recommendedName>
        <fullName>Cytochrome c oxidase subunit 2</fullName>
        <ecNumber>7.1.1.9</ecNumber>
    </recommendedName>
    <alternativeName>
        <fullName>Cytochrome c oxidase polypeptide II</fullName>
    </alternativeName>
</protein>
<reference key="1">
    <citation type="journal article" date="1999" name="Gene">
        <title>The complete mitochondrial DNA sequence of the Atlantic salmon, Salmo salar.</title>
        <authorList>
            <person name="Hurst C.D."/>
            <person name="Bartlett S.E."/>
            <person name="Davidson W.S."/>
            <person name="Bruce I.J."/>
        </authorList>
    </citation>
    <scope>NUCLEOTIDE SEQUENCE [GENOMIC DNA]</scope>
    <source>
        <tissue>Liver</tissue>
    </source>
</reference>
<reference key="2">
    <citation type="submission" date="1999-03" db="EMBL/GenBank/DDBJ databases">
        <title>The complete mitochondrial genome sequence of a teleost, Salmo salar, and comparisons with other salmoniformes.</title>
        <authorList>
            <person name="Arnason U."/>
            <person name="Johnsson E."/>
            <person name="Rasmussen A.S."/>
        </authorList>
    </citation>
    <scope>NUCLEOTIDE SEQUENCE [GENOMIC DNA]</scope>
</reference>
<reference key="3">
    <citation type="journal article" date="1994" name="J. Appl. Ichthyol.">
        <title>Isolation of Atlantic Salmon (Salmo salar) cytochrome c oxidase subunit II gene (coxII).</title>
        <authorList>
            <person name="Hardiman G.T."/>
            <person name="Wolff J."/>
            <person name="Peden J."/>
            <person name="Gannon F."/>
        </authorList>
    </citation>
    <scope>NUCLEOTIDE SEQUENCE [GENOMIC DNA] OF 85-230</scope>
    <source>
        <tissue>Kidney</tissue>
    </source>
</reference>
<reference key="4">
    <citation type="submission" date="1996-09" db="EMBL/GenBank/DDBJ databases">
        <authorList>
            <person name="Hardiman G.T."/>
        </authorList>
    </citation>
    <scope>SEQUENCE REVISION</scope>
</reference>
<dbReference type="EC" id="7.1.1.9"/>
<dbReference type="EMBL" id="U12143">
    <property type="protein sequence ID" value="AAD04736.1"/>
    <property type="molecule type" value="Genomic_DNA"/>
</dbReference>
<dbReference type="EMBL" id="AF133701">
    <property type="protein sequence ID" value="AAF61381.1"/>
    <property type="molecule type" value="Genomic_DNA"/>
</dbReference>
<dbReference type="EMBL" id="L04501">
    <property type="protein sequence ID" value="AAB08524.1"/>
    <property type="molecule type" value="Genomic_DNA"/>
</dbReference>
<dbReference type="PIR" id="T09950">
    <property type="entry name" value="T09950"/>
</dbReference>
<dbReference type="RefSeq" id="NP_008448.1">
    <property type="nucleotide sequence ID" value="NC_001960.1"/>
</dbReference>
<dbReference type="SMR" id="Q37677"/>
<dbReference type="STRING" id="8030.ENSSSAP00000000005"/>
<dbReference type="PaxDb" id="8030-ENSSSAP00000000005"/>
<dbReference type="GeneID" id="808315"/>
<dbReference type="KEGG" id="sasa:808315"/>
<dbReference type="CTD" id="4513"/>
<dbReference type="Proteomes" id="UP000087266">
    <property type="component" value="Mitochondrion MT"/>
</dbReference>
<dbReference type="GO" id="GO:0005743">
    <property type="term" value="C:mitochondrial inner membrane"/>
    <property type="evidence" value="ECO:0007669"/>
    <property type="project" value="UniProtKB-SubCell"/>
</dbReference>
<dbReference type="GO" id="GO:0045277">
    <property type="term" value="C:respiratory chain complex IV"/>
    <property type="evidence" value="ECO:0000250"/>
    <property type="project" value="UniProtKB"/>
</dbReference>
<dbReference type="GO" id="GO:0005507">
    <property type="term" value="F:copper ion binding"/>
    <property type="evidence" value="ECO:0007669"/>
    <property type="project" value="InterPro"/>
</dbReference>
<dbReference type="GO" id="GO:0004129">
    <property type="term" value="F:cytochrome-c oxidase activity"/>
    <property type="evidence" value="ECO:0007669"/>
    <property type="project" value="UniProtKB-EC"/>
</dbReference>
<dbReference type="GO" id="GO:0042773">
    <property type="term" value="P:ATP synthesis coupled electron transport"/>
    <property type="evidence" value="ECO:0007669"/>
    <property type="project" value="TreeGrafter"/>
</dbReference>
<dbReference type="CDD" id="cd13912">
    <property type="entry name" value="CcO_II_C"/>
    <property type="match status" value="1"/>
</dbReference>
<dbReference type="FunFam" id="1.10.287.90:FF:000001">
    <property type="entry name" value="Cytochrome c oxidase subunit 2"/>
    <property type="match status" value="1"/>
</dbReference>
<dbReference type="FunFam" id="2.60.40.420:FF:000001">
    <property type="entry name" value="Cytochrome c oxidase subunit 2"/>
    <property type="match status" value="1"/>
</dbReference>
<dbReference type="Gene3D" id="1.10.287.90">
    <property type="match status" value="1"/>
</dbReference>
<dbReference type="Gene3D" id="2.60.40.420">
    <property type="entry name" value="Cupredoxins - blue copper proteins"/>
    <property type="match status" value="1"/>
</dbReference>
<dbReference type="InterPro" id="IPR045187">
    <property type="entry name" value="CcO_II"/>
</dbReference>
<dbReference type="InterPro" id="IPR002429">
    <property type="entry name" value="CcO_II-like_C"/>
</dbReference>
<dbReference type="InterPro" id="IPR034210">
    <property type="entry name" value="CcO_II_C"/>
</dbReference>
<dbReference type="InterPro" id="IPR001505">
    <property type="entry name" value="Copper_CuA"/>
</dbReference>
<dbReference type="InterPro" id="IPR008972">
    <property type="entry name" value="Cupredoxin"/>
</dbReference>
<dbReference type="InterPro" id="IPR014222">
    <property type="entry name" value="Cyt_c_oxidase_su2"/>
</dbReference>
<dbReference type="InterPro" id="IPR011759">
    <property type="entry name" value="Cyt_c_oxidase_su2_TM_dom"/>
</dbReference>
<dbReference type="InterPro" id="IPR036257">
    <property type="entry name" value="Cyt_c_oxidase_su2_TM_sf"/>
</dbReference>
<dbReference type="NCBIfam" id="TIGR02866">
    <property type="entry name" value="CoxB"/>
    <property type="match status" value="1"/>
</dbReference>
<dbReference type="PANTHER" id="PTHR22888:SF9">
    <property type="entry name" value="CYTOCHROME C OXIDASE SUBUNIT 2"/>
    <property type="match status" value="1"/>
</dbReference>
<dbReference type="PANTHER" id="PTHR22888">
    <property type="entry name" value="CYTOCHROME C OXIDASE, SUBUNIT II"/>
    <property type="match status" value="1"/>
</dbReference>
<dbReference type="Pfam" id="PF00116">
    <property type="entry name" value="COX2"/>
    <property type="match status" value="1"/>
</dbReference>
<dbReference type="Pfam" id="PF02790">
    <property type="entry name" value="COX2_TM"/>
    <property type="match status" value="1"/>
</dbReference>
<dbReference type="PRINTS" id="PR01166">
    <property type="entry name" value="CYCOXIDASEII"/>
</dbReference>
<dbReference type="SUPFAM" id="SSF49503">
    <property type="entry name" value="Cupredoxins"/>
    <property type="match status" value="1"/>
</dbReference>
<dbReference type="SUPFAM" id="SSF81464">
    <property type="entry name" value="Cytochrome c oxidase subunit II-like, transmembrane region"/>
    <property type="match status" value="1"/>
</dbReference>
<dbReference type="PROSITE" id="PS00078">
    <property type="entry name" value="COX2"/>
    <property type="match status" value="1"/>
</dbReference>
<dbReference type="PROSITE" id="PS50857">
    <property type="entry name" value="COX2_CUA"/>
    <property type="match status" value="1"/>
</dbReference>
<dbReference type="PROSITE" id="PS50999">
    <property type="entry name" value="COX2_TM"/>
    <property type="match status" value="1"/>
</dbReference>
<proteinExistence type="inferred from homology"/>
<keyword id="KW-0186">Copper</keyword>
<keyword id="KW-0249">Electron transport</keyword>
<keyword id="KW-0460">Magnesium</keyword>
<keyword id="KW-0472">Membrane</keyword>
<keyword id="KW-0479">Metal-binding</keyword>
<keyword id="KW-0496">Mitochondrion</keyword>
<keyword id="KW-0999">Mitochondrion inner membrane</keyword>
<keyword id="KW-1185">Reference proteome</keyword>
<keyword id="KW-0679">Respiratory chain</keyword>
<keyword id="KW-1278">Translocase</keyword>
<keyword id="KW-0812">Transmembrane</keyword>
<keyword id="KW-1133">Transmembrane helix</keyword>
<keyword id="KW-0813">Transport</keyword>
<sequence length="230" mass="26016">MAHPSQLGFQDAASPVMEELLHFHDHALMIVLLISTLVLYIIVAMVSTKLTNKYILDSQEIEIVWTVLPAVILILIALPSLRILYLMDEINDPHLTIKAMGHQWYWSYEYTDYEDLGFDSYMVPTQDLTPGQFRLLETDHRMVVPVESPIRVLVSAEDVLHSWAVPSLGVKMDASPGRLNQTAFIASRPGVFYGQCSEICGANHSFMPIVVEAVPLEHFEKWSTMMLEDA</sequence>